<sequence>MGFLAIVLSVALLFRSTSGTPLGPRGKHSDCNSVDHGYQCFPELSHKWGLYAPYFSLQDESPFPLDVPEDCHITFVQVLARHGARSPTHSKTKAYAATIAAIQKSATAFPGKYAFLQSYNYSLDSEELTPFGRNQLRDLGAQFYERYNALTRHINPFVRATDASRVHESAEKFVEGFQTARQDDHHANPHQPSPRVDVAIPEGSAYNNTLEHSLCTAFESSTVGDDAVANFTAVFAPAIAQRLEADLPGVQLSTDDVVNLMAMCPFETVSLTDDAHTLSPFCDLFTATEWTQYNYLLSLDKYYGYGGGNPLGPVQGVGWANELMARLTRAPVHDHTCVNNTLDASPATFPLNATLYADFSHDSNLVSIFWALGLYNGTAPLSQTSVESVSQTDGYAAAWTVPFAARAYVEMMQCRAEKEPLVRVLVNDRVMPLHGCPTDKLGRCKRDAFVAGLSFAQAGGNWADCF</sequence>
<feature type="signal peptide" evidence="1">
    <location>
        <begin position="1"/>
        <end position="19"/>
    </location>
</feature>
<feature type="chain" id="PRO_0000023972" description="Phytase A">
    <location>
        <begin position="20"/>
        <end position="466"/>
    </location>
</feature>
<feature type="active site" description="Nucleophile" evidence="2">
    <location>
        <position position="82"/>
    </location>
</feature>
<feature type="binding site" evidence="3">
    <location>
        <position position="51"/>
    </location>
    <ligand>
        <name>1D-myo-inositol hexakisphosphate</name>
        <dbReference type="ChEBI" id="CHEBI:58130"/>
    </ligand>
</feature>
<feature type="binding site" evidence="3">
    <location>
        <position position="81"/>
    </location>
    <ligand>
        <name>1D-myo-inositol hexakisphosphate</name>
        <dbReference type="ChEBI" id="CHEBI:58130"/>
    </ligand>
</feature>
<feature type="binding site" evidence="3">
    <location>
        <position position="82"/>
    </location>
    <ligand>
        <name>1D-myo-inositol hexakisphosphate</name>
        <dbReference type="ChEBI" id="CHEBI:58130"/>
    </ligand>
</feature>
<feature type="binding site" evidence="3">
    <location>
        <position position="85"/>
    </location>
    <ligand>
        <name>1D-myo-inositol hexakisphosphate</name>
        <dbReference type="ChEBI" id="CHEBI:58130"/>
    </ligand>
</feature>
<feature type="binding site" evidence="3">
    <location>
        <position position="88"/>
    </location>
    <ligand>
        <name>1D-myo-inositol hexakisphosphate</name>
        <dbReference type="ChEBI" id="CHEBI:58130"/>
    </ligand>
</feature>
<feature type="binding site" evidence="3">
    <location>
        <position position="165"/>
    </location>
    <ligand>
        <name>1D-myo-inositol hexakisphosphate</name>
        <dbReference type="ChEBI" id="CHEBI:58130"/>
    </ligand>
</feature>
<feature type="binding site" evidence="3">
    <location>
        <position position="301"/>
    </location>
    <ligand>
        <name>1D-myo-inositol hexakisphosphate</name>
        <dbReference type="ChEBI" id="CHEBI:58130"/>
    </ligand>
</feature>
<feature type="binding site" evidence="3">
    <location>
        <position position="361"/>
    </location>
    <ligand>
        <name>1D-myo-inositol hexakisphosphate</name>
        <dbReference type="ChEBI" id="CHEBI:58130"/>
    </ligand>
</feature>
<feature type="binding site" evidence="3">
    <location>
        <position position="362"/>
    </location>
    <ligand>
        <name>1D-myo-inositol hexakisphosphate</name>
        <dbReference type="ChEBI" id="CHEBI:58130"/>
    </ligand>
</feature>
<feature type="glycosylation site" description="N-linked (GlcNAc...) asparagine" evidence="4">
    <location>
        <position position="120"/>
    </location>
</feature>
<feature type="glycosylation site" description="N-linked (GlcNAc...) asparagine" evidence="4">
    <location>
        <position position="207"/>
    </location>
</feature>
<feature type="glycosylation site" description="N-linked (GlcNAc...) asparagine" evidence="4">
    <location>
        <position position="230"/>
    </location>
</feature>
<feature type="glycosylation site" description="N-linked (GlcNAc...) asparagine" evidence="4">
    <location>
        <position position="339"/>
    </location>
</feature>
<feature type="glycosylation site" description="N-linked (GlcNAc...) asparagine" evidence="4">
    <location>
        <position position="352"/>
    </location>
</feature>
<feature type="glycosylation site" description="N-linked (GlcNAc...) asparagine" evidence="4">
    <location>
        <position position="376"/>
    </location>
</feature>
<feature type="disulfide bond" evidence="2">
    <location>
        <begin position="31"/>
        <end position="40"/>
    </location>
</feature>
<feature type="disulfide bond" evidence="2">
    <location>
        <begin position="71"/>
        <end position="414"/>
    </location>
</feature>
<feature type="disulfide bond" evidence="2">
    <location>
        <begin position="215"/>
        <end position="465"/>
    </location>
</feature>
<feature type="disulfide bond" evidence="2">
    <location>
        <begin position="264"/>
        <end position="282"/>
    </location>
</feature>
<feature type="disulfide bond" evidence="2">
    <location>
        <begin position="436"/>
        <end position="444"/>
    </location>
</feature>
<gene>
    <name evidence="8" type="primary">phyA</name>
</gene>
<accession>O00085</accession>
<proteinExistence type="evidence at protein level"/>
<organism>
    <name type="scientific">Aspergillus terreus</name>
    <dbReference type="NCBI Taxonomy" id="33178"/>
    <lineage>
        <taxon>Eukaryota</taxon>
        <taxon>Fungi</taxon>
        <taxon>Dikarya</taxon>
        <taxon>Ascomycota</taxon>
        <taxon>Pezizomycotina</taxon>
        <taxon>Eurotiomycetes</taxon>
        <taxon>Eurotiomycetidae</taxon>
        <taxon>Eurotiales</taxon>
        <taxon>Aspergillaceae</taxon>
        <taxon>Aspergillus</taxon>
        <taxon>Aspergillus subgen. Circumdati</taxon>
    </lineage>
</organism>
<dbReference type="EC" id="3.1.3.-" evidence="7"/>
<dbReference type="EC" id="3.1.3.8" evidence="5 7"/>
<dbReference type="EMBL" id="U59805">
    <property type="protein sequence ID" value="AAB52507.1"/>
    <property type="molecule type" value="Genomic_DNA"/>
</dbReference>
<dbReference type="SMR" id="O00085"/>
<dbReference type="GlyCosmos" id="O00085">
    <property type="glycosylation" value="6 sites, No reported glycans"/>
</dbReference>
<dbReference type="VEuPathDB" id="FungiDB:ATEG_05333"/>
<dbReference type="BRENDA" id="3.1.3.26">
    <property type="organism ID" value="536"/>
</dbReference>
<dbReference type="BRENDA" id="3.1.3.8">
    <property type="organism ID" value="536"/>
</dbReference>
<dbReference type="GO" id="GO:0005576">
    <property type="term" value="C:extracellular region"/>
    <property type="evidence" value="ECO:0007669"/>
    <property type="project" value="UniProtKB-SubCell"/>
</dbReference>
<dbReference type="GO" id="GO:0016158">
    <property type="term" value="F:3-phytase activity"/>
    <property type="evidence" value="ECO:0007669"/>
    <property type="project" value="UniProtKB-EC"/>
</dbReference>
<dbReference type="GO" id="GO:0003993">
    <property type="term" value="F:acid phosphatase activity"/>
    <property type="evidence" value="ECO:0007669"/>
    <property type="project" value="TreeGrafter"/>
</dbReference>
<dbReference type="CDD" id="cd07061">
    <property type="entry name" value="HP_HAP_like"/>
    <property type="match status" value="1"/>
</dbReference>
<dbReference type="FunFam" id="3.40.50.1240:FF:000027">
    <property type="entry name" value="3-phytase A"/>
    <property type="match status" value="1"/>
</dbReference>
<dbReference type="Gene3D" id="3.40.50.1240">
    <property type="entry name" value="Phosphoglycerate mutase-like"/>
    <property type="match status" value="1"/>
</dbReference>
<dbReference type="InterPro" id="IPR033379">
    <property type="entry name" value="Acid_Pase_AS"/>
</dbReference>
<dbReference type="InterPro" id="IPR000560">
    <property type="entry name" value="His_Pase_clade-2"/>
</dbReference>
<dbReference type="InterPro" id="IPR029033">
    <property type="entry name" value="His_PPase_superfam"/>
</dbReference>
<dbReference type="InterPro" id="IPR016274">
    <property type="entry name" value="Histidine_acid_Pase_euk"/>
</dbReference>
<dbReference type="PANTHER" id="PTHR20963:SF24">
    <property type="entry name" value="3-PHYTASE B"/>
    <property type="match status" value="1"/>
</dbReference>
<dbReference type="PANTHER" id="PTHR20963">
    <property type="entry name" value="MULTIPLE INOSITOL POLYPHOSPHATE PHOSPHATASE-RELATED"/>
    <property type="match status" value="1"/>
</dbReference>
<dbReference type="Pfam" id="PF00328">
    <property type="entry name" value="His_Phos_2"/>
    <property type="match status" value="1"/>
</dbReference>
<dbReference type="PIRSF" id="PIRSF000894">
    <property type="entry name" value="Acid_phosphatase"/>
    <property type="match status" value="1"/>
</dbReference>
<dbReference type="SUPFAM" id="SSF53254">
    <property type="entry name" value="Phosphoglycerate mutase-like"/>
    <property type="match status" value="1"/>
</dbReference>
<dbReference type="PROSITE" id="PS00616">
    <property type="entry name" value="HIS_ACID_PHOSPHAT_1"/>
    <property type="match status" value="1"/>
</dbReference>
<dbReference type="PROSITE" id="PS00778">
    <property type="entry name" value="HIS_ACID_PHOSPHAT_2"/>
    <property type="match status" value="1"/>
</dbReference>
<name>PHYA1_ASPTE</name>
<evidence type="ECO:0000250" key="1"/>
<evidence type="ECO:0000250" key="2">
    <source>
        <dbReference type="UniProtKB" id="O00092"/>
    </source>
</evidence>
<evidence type="ECO:0000250" key="3">
    <source>
        <dbReference type="UniProtKB" id="P34752"/>
    </source>
</evidence>
<evidence type="ECO:0000255" key="4"/>
<evidence type="ECO:0000269" key="5">
    <source>
    </source>
</evidence>
<evidence type="ECO:0000269" key="6">
    <source>
    </source>
</evidence>
<evidence type="ECO:0000269" key="7">
    <source>
    </source>
</evidence>
<evidence type="ECO:0000303" key="8">
    <source>
    </source>
</evidence>
<evidence type="ECO:0000303" key="9">
    <source>
    </source>
</evidence>
<evidence type="ECO:0000305" key="10"/>
<comment type="function">
    <text evidence="5 7">Catalyzes the phosphate monoester hydrolysis of phytic acid (myo-inositol hexakisphosphate), which results in the stepwise formation of myo-inositol pentakis-, tetrakis-, tris-, bis-, and monophosphates, as well as the liberation of inorganic phosphate (PubMed:9025298, PubMed:9925555). Myo-inositol 2-monophosphate is the end product (PubMed:9925555). Has a broad substrate specificity and is also able to dephosphorylate other classic acid phosphatase substrates such as p-nitrophenyl phosphate, phenyl phosphate, fructose 1,6-bisphosphate, glucose 6-phosphate, 3-phosphoglycerate, as well as ADP and ATP (PubMed:9925555).</text>
</comment>
<comment type="catalytic activity">
    <reaction evidence="5 7">
        <text>1D-myo-inositol hexakisphosphate + H2O = 1D-myo-inositol 1,2,4,5,6-pentakisphosphate + phosphate</text>
        <dbReference type="Rhea" id="RHEA:16989"/>
        <dbReference type="ChEBI" id="CHEBI:15377"/>
        <dbReference type="ChEBI" id="CHEBI:43474"/>
        <dbReference type="ChEBI" id="CHEBI:57798"/>
        <dbReference type="ChEBI" id="CHEBI:58130"/>
        <dbReference type="EC" id="3.1.3.8"/>
    </reaction>
    <physiologicalReaction direction="left-to-right" evidence="5 7">
        <dbReference type="Rhea" id="RHEA:16990"/>
    </physiologicalReaction>
</comment>
<comment type="catalytic activity">
    <reaction evidence="7">
        <text>1D-myo-inositol 1,2,4,5,6-pentakisphosphate + H2O = 1D-myo-inositol 1,2,5,6-tetrakisphosphate + phosphate</text>
        <dbReference type="Rhea" id="RHEA:77115"/>
        <dbReference type="ChEBI" id="CHEBI:15377"/>
        <dbReference type="ChEBI" id="CHEBI:43474"/>
        <dbReference type="ChEBI" id="CHEBI:57798"/>
        <dbReference type="ChEBI" id="CHEBI:195535"/>
    </reaction>
    <physiologicalReaction direction="left-to-right" evidence="7">
        <dbReference type="Rhea" id="RHEA:77116"/>
    </physiologicalReaction>
</comment>
<comment type="catalytic activity">
    <reaction evidence="7">
        <text>1D-myo-inositol 1,2,5,6-tetrakisphosphate + H2O = 1D-myo-inositol 1,2,6-trisphosphate + phosphate</text>
        <dbReference type="Rhea" id="RHEA:77119"/>
        <dbReference type="ChEBI" id="CHEBI:15377"/>
        <dbReference type="ChEBI" id="CHEBI:43474"/>
        <dbReference type="ChEBI" id="CHEBI:195535"/>
        <dbReference type="ChEBI" id="CHEBI:195537"/>
    </reaction>
    <physiologicalReaction direction="left-to-right" evidence="7">
        <dbReference type="Rhea" id="RHEA:77120"/>
    </physiologicalReaction>
</comment>
<comment type="catalytic activity">
    <reaction evidence="7">
        <text>1D-myo-inositol 1,2,6-trisphosphate + H2O = 1D-myo-inositol 1,2-bisphosphate + phosphate</text>
        <dbReference type="Rhea" id="RHEA:77131"/>
        <dbReference type="ChEBI" id="CHEBI:15377"/>
        <dbReference type="ChEBI" id="CHEBI:43474"/>
        <dbReference type="ChEBI" id="CHEBI:195537"/>
        <dbReference type="ChEBI" id="CHEBI:195539"/>
    </reaction>
    <physiologicalReaction direction="left-to-right" evidence="7">
        <dbReference type="Rhea" id="RHEA:77132"/>
    </physiologicalReaction>
</comment>
<comment type="catalytic activity">
    <reaction evidence="7">
        <text>1D-myo-inositol 1,2-bisphosphate + H2O = 1D-myo-inositol 2-phosphate + phosphate</text>
        <dbReference type="Rhea" id="RHEA:77135"/>
        <dbReference type="ChEBI" id="CHEBI:15377"/>
        <dbReference type="ChEBI" id="CHEBI:43474"/>
        <dbReference type="ChEBI" id="CHEBI:84142"/>
        <dbReference type="ChEBI" id="CHEBI:195539"/>
    </reaction>
    <physiologicalReaction direction="left-to-right" evidence="7">
        <dbReference type="Rhea" id="RHEA:77136"/>
    </physiologicalReaction>
</comment>
<comment type="biophysicochemical properties">
    <kinetics>
        <KM evidence="7">10.6 uM for phytate</KM>
    </kinetics>
    <phDependence>
        <text evidence="7">Optimum pH is 5.5. Active from 2.5 to 7.5 with phytic acid as substrate. The optimum pH is shifted to more acidic values with 4-nitrophenyl phosphate as substrate.</text>
    </phDependence>
</comment>
<comment type="subunit">
    <text evidence="6">Monomer.</text>
</comment>
<comment type="subcellular location">
    <subcellularLocation>
        <location evidence="10">Secreted</location>
    </subcellularLocation>
</comment>
<comment type="similarity">
    <text evidence="10">Belongs to the histidine acid phosphatase family.</text>
</comment>
<protein>
    <recommendedName>
        <fullName evidence="8">Phytase A</fullName>
        <ecNumber evidence="7">3.1.3.-</ecNumber>
        <ecNumber evidence="5 7">3.1.3.8</ecNumber>
    </recommendedName>
    <alternativeName>
        <fullName evidence="8">Histidine acid phosphatase phyA</fullName>
        <shortName evidence="8">HAP</shortName>
    </alternativeName>
    <alternativeName>
        <fullName evidence="9">Myo-inositol hexakisphosphate phosphohydrolase A</fullName>
    </alternativeName>
    <alternativeName>
        <fullName evidence="9">Myo-inositol-hexaphosphate 3-phosphohydrolase A</fullName>
    </alternativeName>
</protein>
<keyword id="KW-0903">Direct protein sequencing</keyword>
<keyword id="KW-1015">Disulfide bond</keyword>
<keyword id="KW-0325">Glycoprotein</keyword>
<keyword id="KW-0378">Hydrolase</keyword>
<keyword id="KW-0964">Secreted</keyword>
<keyword id="KW-0732">Signal</keyword>
<reference key="1">
    <citation type="journal article" date="1997" name="Microbiology">
        <title>The phytase subfamily of histidine acid phosphatases: isolation of genes for two novel phytases from the fungi Aspergillus terreus and Myceliophthora thermophila.</title>
        <authorList>
            <person name="Mitchell D.B."/>
            <person name="Vogel K."/>
            <person name="Weimann B.J."/>
            <person name="Pasamontes L."/>
            <person name="van Loon A.P.G.M."/>
        </authorList>
    </citation>
    <scope>NUCLEOTIDE SEQUENCE [GENOMIC DNA]</scope>
    <scope>FUNCTION</scope>
    <scope>CATALYTIC ACTIVITY</scope>
    <source>
        <strain>9A1</strain>
    </source>
</reference>
<reference key="2">
    <citation type="journal article" date="1999" name="Appl. Environ. Microbiol.">
        <title>Biophysical characterization of fungal phytases (myo-inositol hexakisphosphate phosphohydrolases): molecular size, glycosylation pattern, and engineering of proteolytic resistance.</title>
        <authorList>
            <person name="Wyss M."/>
            <person name="Pasamontes L."/>
            <person name="Friedlein A."/>
            <person name="Remy R."/>
            <person name="Tessier M."/>
            <person name="Kronenberger A."/>
            <person name="Middendorf A."/>
            <person name="Lehmann M."/>
            <person name="Schnoebelen L."/>
            <person name="Roethlisberger U."/>
            <person name="Kusznir E."/>
            <person name="Wahl G."/>
            <person name="Mueller F."/>
            <person name="Lahm H.-W."/>
            <person name="Vogel K."/>
            <person name="van Loon A.P.G.M."/>
        </authorList>
    </citation>
    <scope>PROTEIN SEQUENCE OF 29-38 AND 192-200</scope>
    <scope>SUBUNIT</scope>
    <source>
        <strain>9A1</strain>
    </source>
</reference>
<reference key="3">
    <citation type="journal article" date="1999" name="Appl. Environ. Microbiol.">
        <title>Biochemical characterization of fungal phytases (myo-inositol hexakisphosphate phosphohydrolases): catalytic properties.</title>
        <authorList>
            <person name="Wyss M."/>
            <person name="Brugger R."/>
            <person name="Kronenberger A."/>
            <person name="Remy R."/>
            <person name="Fimbel R."/>
            <person name="Oesterhelt G."/>
            <person name="Lehmann M."/>
            <person name="van Loon A.P.G.M."/>
        </authorList>
    </citation>
    <scope>FUNCTION</scope>
    <scope>BIOPHYSICOCHEMICAL PROPERTIES</scope>
</reference>